<organism>
    <name type="scientific">Homo sapiens</name>
    <name type="common">Human</name>
    <dbReference type="NCBI Taxonomy" id="9606"/>
    <lineage>
        <taxon>Eukaryota</taxon>
        <taxon>Metazoa</taxon>
        <taxon>Chordata</taxon>
        <taxon>Craniata</taxon>
        <taxon>Vertebrata</taxon>
        <taxon>Euteleostomi</taxon>
        <taxon>Mammalia</taxon>
        <taxon>Eutheria</taxon>
        <taxon>Euarchontoglires</taxon>
        <taxon>Primates</taxon>
        <taxon>Haplorrhini</taxon>
        <taxon>Catarrhini</taxon>
        <taxon>Hominidae</taxon>
        <taxon>Homo</taxon>
    </lineage>
</organism>
<dbReference type="EMBL" id="AC055866">
    <property type="status" value="NOT_ANNOTATED_CDS"/>
    <property type="molecule type" value="Genomic_DNA"/>
</dbReference>
<dbReference type="EMBL" id="BC014873">
    <property type="protein sequence ID" value="AAH14873.1"/>
    <property type="status" value="ALT_INIT"/>
    <property type="molecule type" value="mRNA"/>
</dbReference>
<dbReference type="EMBL" id="BC039247">
    <property type="protein sequence ID" value="AAH39247.1"/>
    <property type="molecule type" value="mRNA"/>
</dbReference>
<dbReference type="EMBL" id="AL831813">
    <property type="protein sequence ID" value="CAD38528.1"/>
    <property type="molecule type" value="mRNA"/>
</dbReference>
<dbReference type="EMBL" id="AY189284">
    <property type="protein sequence ID" value="AAO86728.1"/>
    <property type="status" value="ALT_INIT"/>
    <property type="molecule type" value="mRNA"/>
</dbReference>
<dbReference type="CCDS" id="CCDS11448.1">
    <molecule id="Q96C34-1"/>
</dbReference>
<dbReference type="RefSeq" id="NP_775102.3">
    <molecule id="Q96C34-1"/>
    <property type="nucleotide sequence ID" value="NM_173079.5"/>
</dbReference>
<dbReference type="SMR" id="Q96C34"/>
<dbReference type="BioGRID" id="127025">
    <property type="interactions" value="20"/>
</dbReference>
<dbReference type="FunCoup" id="Q96C34">
    <property type="interactions" value="1620"/>
</dbReference>
<dbReference type="IntAct" id="Q96C34">
    <property type="interactions" value="10"/>
</dbReference>
<dbReference type="STRING" id="9606.ENSP00000354622"/>
<dbReference type="iPTMnet" id="Q96C34"/>
<dbReference type="PhosphoSitePlus" id="Q96C34"/>
<dbReference type="SwissPalm" id="Q96C34"/>
<dbReference type="BioMuta" id="RUNDC1"/>
<dbReference type="DMDM" id="296452974"/>
<dbReference type="jPOST" id="Q96C34"/>
<dbReference type="MassIVE" id="Q96C34"/>
<dbReference type="PaxDb" id="9606-ENSP00000354622"/>
<dbReference type="PeptideAtlas" id="Q96C34"/>
<dbReference type="ProteomicsDB" id="76156">
    <molecule id="Q96C34-1"/>
</dbReference>
<dbReference type="ProteomicsDB" id="76157">
    <molecule id="Q96C34-2"/>
</dbReference>
<dbReference type="Pumba" id="Q96C34"/>
<dbReference type="Antibodypedia" id="17190">
    <property type="antibodies" value="58 antibodies from 18 providers"/>
</dbReference>
<dbReference type="Ensembl" id="ENST00000361677.6">
    <molecule id="Q96C34-1"/>
    <property type="protein sequence ID" value="ENSP00000354622.1"/>
    <property type="gene ID" value="ENSG00000198863.8"/>
</dbReference>
<dbReference type="GeneID" id="146923"/>
<dbReference type="MANE-Select" id="ENST00000361677.6">
    <property type="protein sequence ID" value="ENSP00000354622.1"/>
    <property type="RefSeq nucleotide sequence ID" value="NM_173079.5"/>
    <property type="RefSeq protein sequence ID" value="NP_775102.3"/>
</dbReference>
<dbReference type="UCSC" id="uc002ici.1">
    <molecule id="Q96C34-1"/>
    <property type="organism name" value="human"/>
</dbReference>
<dbReference type="AGR" id="HGNC:25418"/>
<dbReference type="GeneCards" id="RUNDC1"/>
<dbReference type="HGNC" id="HGNC:25418">
    <property type="gene designation" value="RUNDC1"/>
</dbReference>
<dbReference type="HPA" id="ENSG00000198863">
    <property type="expression patterns" value="Low tissue specificity"/>
</dbReference>
<dbReference type="MIM" id="619250">
    <property type="type" value="gene"/>
</dbReference>
<dbReference type="neXtProt" id="NX_Q96C34"/>
<dbReference type="OpenTargets" id="ENSG00000198863"/>
<dbReference type="PharmGKB" id="PA134956633"/>
<dbReference type="VEuPathDB" id="HostDB:ENSG00000198863"/>
<dbReference type="eggNOG" id="KOG3759">
    <property type="taxonomic scope" value="Eukaryota"/>
</dbReference>
<dbReference type="GeneTree" id="ENSGT00390000007311"/>
<dbReference type="HOGENOM" id="CLU_020366_0_0_1"/>
<dbReference type="InParanoid" id="Q96C34"/>
<dbReference type="OMA" id="THKGNHW"/>
<dbReference type="OrthoDB" id="10068328at2759"/>
<dbReference type="PAN-GO" id="Q96C34">
    <property type="GO annotations" value="2 GO annotations based on evolutionary models"/>
</dbReference>
<dbReference type="PhylomeDB" id="Q96C34"/>
<dbReference type="TreeFam" id="TF105949"/>
<dbReference type="PathwayCommons" id="Q96C34"/>
<dbReference type="SignaLink" id="Q96C34"/>
<dbReference type="BioGRID-ORCS" id="146923">
    <property type="hits" value="4 hits in 1148 CRISPR screens"/>
</dbReference>
<dbReference type="ChiTaRS" id="RUNDC1">
    <property type="organism name" value="human"/>
</dbReference>
<dbReference type="Pharos" id="Q96C34">
    <property type="development level" value="Tdark"/>
</dbReference>
<dbReference type="PRO" id="PR:Q96C34"/>
<dbReference type="Proteomes" id="UP000005640">
    <property type="component" value="Chromosome 17"/>
</dbReference>
<dbReference type="RNAct" id="Q96C34">
    <property type="molecule type" value="protein"/>
</dbReference>
<dbReference type="Bgee" id="ENSG00000198863">
    <property type="expression patterns" value="Expressed in Brodmann (1909) area 23 and 178 other cell types or tissues"/>
</dbReference>
<dbReference type="ExpressionAtlas" id="Q96C34">
    <property type="expression patterns" value="baseline and differential"/>
</dbReference>
<dbReference type="GO" id="GO:0001701">
    <property type="term" value="P:in utero embryonic development"/>
    <property type="evidence" value="ECO:0007669"/>
    <property type="project" value="Ensembl"/>
</dbReference>
<dbReference type="CDD" id="cd17683">
    <property type="entry name" value="RUN_RUNDC1"/>
    <property type="match status" value="1"/>
</dbReference>
<dbReference type="FunFam" id="1.20.58.900:FF:000012">
    <property type="entry name" value="RUN domain-containing protein 1"/>
    <property type="match status" value="1"/>
</dbReference>
<dbReference type="Gene3D" id="1.20.58.900">
    <property type="match status" value="1"/>
</dbReference>
<dbReference type="InterPro" id="IPR004012">
    <property type="entry name" value="Run_dom"/>
</dbReference>
<dbReference type="InterPro" id="IPR037213">
    <property type="entry name" value="Run_dom_sf"/>
</dbReference>
<dbReference type="PANTHER" id="PTHR47194:SF5">
    <property type="entry name" value="RUN DOMAIN-CONTAINING PROTEIN 1"/>
    <property type="match status" value="1"/>
</dbReference>
<dbReference type="PANTHER" id="PTHR47194">
    <property type="entry name" value="SORTING NEXIN-29-RELATED"/>
    <property type="match status" value="1"/>
</dbReference>
<dbReference type="Pfam" id="PF02759">
    <property type="entry name" value="RUN"/>
    <property type="match status" value="1"/>
</dbReference>
<dbReference type="SMART" id="SM00593">
    <property type="entry name" value="RUN"/>
    <property type="match status" value="1"/>
</dbReference>
<dbReference type="SUPFAM" id="SSF140741">
    <property type="entry name" value="RUN domain-like"/>
    <property type="match status" value="1"/>
</dbReference>
<dbReference type="PROSITE" id="PS50826">
    <property type="entry name" value="RUN"/>
    <property type="match status" value="1"/>
</dbReference>
<name>RUND1_HUMAN</name>
<sequence length="613" mass="67643">MAAVEAAAEPVTVVAAVGPKAKDEEEEEEEPLPPCEAVRWAPVGAVAEARPGATAFLEEATAEEPGAAPGSPPDSPGRTLRRLRAERRRLDSALLALSSHFAQVQFRLRQVVRGAPAEQQRLLRELEDFAFRGCPHVLGYEGPGDPASDEGDGLPGDRPWLRGEDQSEQEKQERLETQREKQKELILQLKTQLDDLETFAYQEGSYDSLPQSVVLERQRVIIDELIKKLDMNLNEDISSLSTEELRQRVDAAVAQIVNPARVKEQLVEQLKTQIRDLEMFINFIQDEVGSPLQTGGGHCECKAGGKTGNGCSRTGSSRTPPGNSKTKAEDVKKVRETGLHLMRRALAVLQIFAVSQFGCATGQIPPTLWQRVQADRDYSPLLKRLEVSVDRVKQLALRQQPHDHVITSANLQDLSLGGKDELTMAVRKELTVAVRDLLAHGLYASSPGMSLVMAPIACLLPAFSSAPEAMHPWELFVKYYHAKNGRAYVESPARKLSQSFALPVTGGTVVTPKQSLLTAIHMVLTEHDPFKRSADSELKALVCMALNEQRLVSWVNLICKSGSLIEPHYQPWSYMAHTGFESALNLLSRLSSLKFSLPVDLAVRQLKNIKDAF</sequence>
<feature type="chain" id="PRO_0000284511" description="RUN domain-containing protein 1">
    <location>
        <begin position="1"/>
        <end position="613"/>
    </location>
</feature>
<feature type="domain" description="RUN" evidence="3">
    <location>
        <begin position="421"/>
        <end position="602"/>
    </location>
</feature>
<feature type="region of interest" description="Disordered" evidence="4">
    <location>
        <begin position="15"/>
        <end position="36"/>
    </location>
</feature>
<feature type="region of interest" description="Disordered" evidence="4">
    <location>
        <begin position="57"/>
        <end position="79"/>
    </location>
</feature>
<feature type="region of interest" description="Disordered" evidence="4">
    <location>
        <begin position="140"/>
        <end position="177"/>
    </location>
</feature>
<feature type="region of interest" description="Disordered" evidence="4">
    <location>
        <begin position="305"/>
        <end position="330"/>
    </location>
</feature>
<feature type="coiled-coil region" evidence="2">
    <location>
        <begin position="160"/>
        <end position="235"/>
    </location>
</feature>
<feature type="compositionally biased region" description="Low complexity" evidence="4">
    <location>
        <begin position="57"/>
        <end position="69"/>
    </location>
</feature>
<feature type="compositionally biased region" description="Basic and acidic residues" evidence="4">
    <location>
        <begin position="159"/>
        <end position="177"/>
    </location>
</feature>
<feature type="compositionally biased region" description="Polar residues" evidence="4">
    <location>
        <begin position="309"/>
        <end position="325"/>
    </location>
</feature>
<feature type="modified residue" description="Phosphothreonine" evidence="12">
    <location>
        <position position="54"/>
    </location>
</feature>
<feature type="modified residue" description="Phosphoserine" evidence="11">
    <location>
        <position position="71"/>
    </location>
</feature>
<feature type="modified residue" description="Phosphoserine" evidence="11">
    <location>
        <position position="75"/>
    </location>
</feature>
<feature type="modified residue" description="Phosphoserine" evidence="1">
    <location>
        <position position="497"/>
    </location>
</feature>
<feature type="splice variant" id="VSP_024551" description="In isoform 2." evidence="9">
    <location>
        <position position="286"/>
    </location>
</feature>
<feature type="sequence variant" id="VAR_031760" description="In dbSNP:rs17853899." evidence="5">
    <original>V</original>
    <variation>I</variation>
    <location>
        <position position="4"/>
    </location>
</feature>
<feature type="sequence variant" id="VAR_031761" description="In dbSNP:rs1708875." evidence="5 6 8">
    <original>W</original>
    <variation>R</variation>
    <location>
        <position position="160"/>
    </location>
</feature>
<feature type="sequence variant" id="VAR_031762" description="In dbSNP:rs17857183." evidence="5">
    <original>L</original>
    <variation>M</variation>
    <location>
        <position position="397"/>
    </location>
</feature>
<feature type="sequence variant" id="VAR_051328" description="In dbSNP:rs3744241.">
    <original>E</original>
    <variation>K</variation>
    <location>
        <position position="566"/>
    </location>
</feature>
<feature type="sequence conflict" description="In Ref. 4; AAO86728." evidence="10" ref="4">
    <original>Q</original>
    <variation>QGL</variation>
    <location>
        <position position="166"/>
    </location>
</feature>
<reference key="1">
    <citation type="journal article" date="2006" name="Nature">
        <title>DNA sequence of human chromosome 17 and analysis of rearrangement in the human lineage.</title>
        <authorList>
            <person name="Zody M.C."/>
            <person name="Garber M."/>
            <person name="Adams D.J."/>
            <person name="Sharpe T."/>
            <person name="Harrow J."/>
            <person name="Lupski J.R."/>
            <person name="Nicholson C."/>
            <person name="Searle S.M."/>
            <person name="Wilming L."/>
            <person name="Young S.K."/>
            <person name="Abouelleil A."/>
            <person name="Allen N.R."/>
            <person name="Bi W."/>
            <person name="Bloom T."/>
            <person name="Borowsky M.L."/>
            <person name="Bugalter B.E."/>
            <person name="Butler J."/>
            <person name="Chang J.L."/>
            <person name="Chen C.-K."/>
            <person name="Cook A."/>
            <person name="Corum B."/>
            <person name="Cuomo C.A."/>
            <person name="de Jong P.J."/>
            <person name="DeCaprio D."/>
            <person name="Dewar K."/>
            <person name="FitzGerald M."/>
            <person name="Gilbert J."/>
            <person name="Gibson R."/>
            <person name="Gnerre S."/>
            <person name="Goldstein S."/>
            <person name="Grafham D.V."/>
            <person name="Grocock R."/>
            <person name="Hafez N."/>
            <person name="Hagopian D.S."/>
            <person name="Hart E."/>
            <person name="Norman C.H."/>
            <person name="Humphray S."/>
            <person name="Jaffe D.B."/>
            <person name="Jones M."/>
            <person name="Kamal M."/>
            <person name="Khodiyar V.K."/>
            <person name="LaButti K."/>
            <person name="Laird G."/>
            <person name="Lehoczky J."/>
            <person name="Liu X."/>
            <person name="Lokyitsang T."/>
            <person name="Loveland J."/>
            <person name="Lui A."/>
            <person name="Macdonald P."/>
            <person name="Major J.E."/>
            <person name="Matthews L."/>
            <person name="Mauceli E."/>
            <person name="McCarroll S.A."/>
            <person name="Mihalev A.H."/>
            <person name="Mudge J."/>
            <person name="Nguyen C."/>
            <person name="Nicol R."/>
            <person name="O'Leary S.B."/>
            <person name="Osoegawa K."/>
            <person name="Schwartz D.C."/>
            <person name="Shaw-Smith C."/>
            <person name="Stankiewicz P."/>
            <person name="Steward C."/>
            <person name="Swarbreck D."/>
            <person name="Venkataraman V."/>
            <person name="Whittaker C.A."/>
            <person name="Yang X."/>
            <person name="Zimmer A.R."/>
            <person name="Bradley A."/>
            <person name="Hubbard T."/>
            <person name="Birren B.W."/>
            <person name="Rogers J."/>
            <person name="Lander E.S."/>
            <person name="Nusbaum C."/>
        </authorList>
    </citation>
    <scope>NUCLEOTIDE SEQUENCE [LARGE SCALE GENOMIC DNA]</scope>
</reference>
<reference key="2">
    <citation type="journal article" date="2004" name="Genome Res.">
        <title>The status, quality, and expansion of the NIH full-length cDNA project: the Mammalian Gene Collection (MGC).</title>
        <authorList>
            <consortium name="The MGC Project Team"/>
        </authorList>
    </citation>
    <scope>NUCLEOTIDE SEQUENCE [LARGE SCALE MRNA] (ISOFORMS 1 AND 2)</scope>
    <scope>VARIANTS ILE-4; ARG-160 AND MET-397</scope>
    <source>
        <tissue>Lymph</tissue>
        <tissue>Testis</tissue>
    </source>
</reference>
<reference key="3">
    <citation type="journal article" date="2007" name="BMC Genomics">
        <title>The full-ORF clone resource of the German cDNA consortium.</title>
        <authorList>
            <person name="Bechtel S."/>
            <person name="Rosenfelder H."/>
            <person name="Duda A."/>
            <person name="Schmidt C.P."/>
            <person name="Ernst U."/>
            <person name="Wellenreuther R."/>
            <person name="Mehrle A."/>
            <person name="Schuster C."/>
            <person name="Bahr A."/>
            <person name="Bloecker H."/>
            <person name="Heubner D."/>
            <person name="Hoerlein A."/>
            <person name="Michel G."/>
            <person name="Wedler H."/>
            <person name="Koehrer K."/>
            <person name="Ottenwaelder B."/>
            <person name="Poustka A."/>
            <person name="Wiemann S."/>
            <person name="Schupp I."/>
        </authorList>
    </citation>
    <scope>NUCLEOTIDE SEQUENCE [LARGE SCALE MRNA] OF 2-613 (ISOFORM 1)</scope>
    <scope>VARIANT ARG-160</scope>
    <source>
        <tissue>Amygdala</tissue>
    </source>
</reference>
<reference key="4">
    <citation type="journal article" date="2004" name="Proc. Natl. Acad. Sci. U.S.A.">
        <title>Large-scale cDNA transfection screening for genes related to cancer development and progression.</title>
        <authorList>
            <person name="Wan D."/>
            <person name="Gong Y."/>
            <person name="Qin W."/>
            <person name="Zhang P."/>
            <person name="Li J."/>
            <person name="Wei L."/>
            <person name="Zhou X."/>
            <person name="Li H."/>
            <person name="Qiu X."/>
            <person name="Zhong F."/>
            <person name="He L."/>
            <person name="Yu J."/>
            <person name="Yao G."/>
            <person name="Jiang H."/>
            <person name="Qian L."/>
            <person name="Yu Y."/>
            <person name="Shu H."/>
            <person name="Chen X."/>
            <person name="Xu H."/>
            <person name="Guo M."/>
            <person name="Pan Z."/>
            <person name="Chen Y."/>
            <person name="Ge C."/>
            <person name="Yang S."/>
            <person name="Gu J."/>
        </authorList>
    </citation>
    <scope>NUCLEOTIDE SEQUENCE [LARGE SCALE MRNA] OF 4-613 (ISOFORM 1)</scope>
    <scope>VARIANT ARG-160</scope>
</reference>
<reference key="5">
    <citation type="journal article" date="2006" name="Cell Cycle">
        <title>A high-throughput loss-of-function screening identifies novel p53 regulators.</title>
        <authorList>
            <person name="Llanos S."/>
            <person name="Efeyan A."/>
            <person name="Monsech J."/>
            <person name="Dominguez O."/>
            <person name="Serrano M."/>
        </authorList>
    </citation>
    <scope>FUNCTION</scope>
</reference>
<reference key="6">
    <citation type="journal article" date="2008" name="Proc. Natl. Acad. Sci. U.S.A.">
        <title>A quantitative atlas of mitotic phosphorylation.</title>
        <authorList>
            <person name="Dephoure N."/>
            <person name="Zhou C."/>
            <person name="Villen J."/>
            <person name="Beausoleil S.A."/>
            <person name="Bakalarski C.E."/>
            <person name="Elledge S.J."/>
            <person name="Gygi S.P."/>
        </authorList>
    </citation>
    <scope>PHOSPHORYLATION [LARGE SCALE ANALYSIS] AT SER-71 AND SER-75</scope>
    <scope>IDENTIFICATION BY MASS SPECTROMETRY [LARGE SCALE ANALYSIS]</scope>
    <source>
        <tissue>Cervix carcinoma</tissue>
    </source>
</reference>
<reference key="7">
    <citation type="journal article" date="2011" name="Sci. Signal.">
        <title>System-wide temporal characterization of the proteome and phosphoproteome of human embryonic stem cell differentiation.</title>
        <authorList>
            <person name="Rigbolt K.T."/>
            <person name="Prokhorova T.A."/>
            <person name="Akimov V."/>
            <person name="Henningsen J."/>
            <person name="Johansen P.T."/>
            <person name="Kratchmarova I."/>
            <person name="Kassem M."/>
            <person name="Mann M."/>
            <person name="Olsen J.V."/>
            <person name="Blagoev B."/>
        </authorList>
    </citation>
    <scope>PHOSPHORYLATION [LARGE SCALE ANALYSIS] AT THR-54</scope>
    <scope>IDENTIFICATION BY MASS SPECTROMETRY [LARGE SCALE ANALYSIS]</scope>
</reference>
<keyword id="KW-0025">Alternative splicing</keyword>
<keyword id="KW-0175">Coiled coil</keyword>
<keyword id="KW-0597">Phosphoprotein</keyword>
<keyword id="KW-1267">Proteomics identification</keyword>
<keyword id="KW-1185">Reference proteome</keyword>
<proteinExistence type="evidence at protein level"/>
<evidence type="ECO:0000250" key="1">
    <source>
        <dbReference type="UniProtKB" id="Q0VDN7"/>
    </source>
</evidence>
<evidence type="ECO:0000255" key="2"/>
<evidence type="ECO:0000255" key="3">
    <source>
        <dbReference type="PROSITE-ProRule" id="PRU00178"/>
    </source>
</evidence>
<evidence type="ECO:0000256" key="4">
    <source>
        <dbReference type="SAM" id="MobiDB-lite"/>
    </source>
</evidence>
<evidence type="ECO:0000269" key="5">
    <source>
    </source>
</evidence>
<evidence type="ECO:0000269" key="6">
    <source>
    </source>
</evidence>
<evidence type="ECO:0000269" key="7">
    <source>
    </source>
</evidence>
<evidence type="ECO:0000269" key="8">
    <source>
    </source>
</evidence>
<evidence type="ECO:0000303" key="9">
    <source>
    </source>
</evidence>
<evidence type="ECO:0000305" key="10"/>
<evidence type="ECO:0007744" key="11">
    <source>
    </source>
</evidence>
<evidence type="ECO:0007744" key="12">
    <source>
    </source>
</evidence>
<protein>
    <recommendedName>
        <fullName>RUN domain-containing protein 1</fullName>
    </recommendedName>
</protein>
<gene>
    <name type="primary">RUNDC1</name>
    <name type="ORF">LP5161</name>
</gene>
<comment type="function">
    <text evidence="7">May play a role as p53/TP53 inhibitor and thus may have oncogenic activity.</text>
</comment>
<comment type="alternative products">
    <event type="alternative splicing"/>
    <isoform>
        <id>Q96C34-1</id>
        <name>1</name>
        <sequence type="displayed"/>
    </isoform>
    <isoform>
        <id>Q96C34-2</id>
        <name>2</name>
        <sequence type="described" ref="VSP_024551"/>
    </isoform>
</comment>
<comment type="sequence caution" evidence="10">
    <conflict type="erroneous initiation">
        <sequence resource="EMBL-CDS" id="AAH14873"/>
    </conflict>
    <text>Extended N-terminus.</text>
</comment>
<comment type="sequence caution" evidence="10">
    <conflict type="erroneous initiation">
        <sequence resource="EMBL-CDS" id="AAO86728"/>
    </conflict>
    <text>Truncated N-terminus.</text>
</comment>
<accession>Q96C34</accession>
<accession>Q6Y2K8</accession>
<accession>Q8IXT9</accession>
<accession>Q8N3W1</accession>